<feature type="chain" id="PRO_0000196824" description="Uncharacterized mitochondrial protein AtMg01290">
    <location>
        <begin position="1"/>
        <end position="111"/>
    </location>
</feature>
<protein>
    <recommendedName>
        <fullName>Uncharacterized mitochondrial protein AtMg01290</fullName>
    </recommendedName>
    <alternativeName>
        <fullName>ORF111c</fullName>
    </alternativeName>
</protein>
<dbReference type="EMBL" id="Y08501">
    <property type="protein sequence ID" value="CAA69813.1"/>
    <property type="molecule type" value="Genomic_DNA"/>
</dbReference>
<dbReference type="EMBL" id="BK010421">
    <property type="status" value="NOT_ANNOTATED_CDS"/>
    <property type="molecule type" value="Genomic_DNA"/>
</dbReference>
<dbReference type="EMBL" id="AC007730">
    <property type="status" value="NOT_ANNOTATED_CDS"/>
    <property type="molecule type" value="Genomic_DNA"/>
</dbReference>
<dbReference type="EMBL" id="CP002685">
    <property type="status" value="NOT_ANNOTATED_CDS"/>
    <property type="molecule type" value="Genomic_DNA"/>
</dbReference>
<dbReference type="RefSeq" id="NP_085581.1">
    <property type="nucleotide sequence ID" value="NC_001284.2"/>
</dbReference>
<dbReference type="iPTMnet" id="P92560"/>
<dbReference type="PaxDb" id="3702-ATMG01290.1"/>
<dbReference type="EnsemblPlants" id="ATMG01290.1">
    <property type="protein sequence ID" value="ATMG01290.1"/>
    <property type="gene ID" value="ATMG01290"/>
</dbReference>
<dbReference type="Gramene" id="ATMG01290.1">
    <property type="protein sequence ID" value="ATMG01290.1"/>
    <property type="gene ID" value="ATMG01290"/>
</dbReference>
<dbReference type="Araport" id="AT2G07693"/>
<dbReference type="Araport" id="ATMG01290"/>
<dbReference type="TAIR" id="AT2G07693"/>
<dbReference type="TAIR" id="ATMG01290">
    <property type="gene designation" value="ORF111C"/>
</dbReference>
<dbReference type="HOGENOM" id="CLU_2161894_0_0_1"/>
<dbReference type="InParanoid" id="P92560"/>
<dbReference type="PRO" id="PR:P92560"/>
<dbReference type="Proteomes" id="UP000006548">
    <property type="component" value="Chromosome 2"/>
</dbReference>
<dbReference type="Proteomes" id="UP000006548">
    <property type="component" value="Mitochondrion MT"/>
</dbReference>
<dbReference type="ExpressionAtlas" id="P92560">
    <property type="expression patterns" value="baseline and differential"/>
</dbReference>
<dbReference type="GO" id="GO:0005739">
    <property type="term" value="C:mitochondrion"/>
    <property type="evidence" value="ECO:0007669"/>
    <property type="project" value="UniProtKB-SubCell"/>
</dbReference>
<name>M1290_ARATH</name>
<keyword id="KW-0496">Mitochondrion</keyword>
<keyword id="KW-1185">Reference proteome</keyword>
<accession>P92560</accession>
<accession>Q1ZXV8</accession>
<sequence>MTFVPTDFLIRTPDDPAYFKDRLASPFSFRGCSKTTSTSSSIYSKKKASTATYFRVDPVPRGSQSSRVCEPKTKLIVYQPGNYQKKVKRQVTDPLSLMDKVKKRIDKTEIL</sequence>
<comment type="subcellular location">
    <subcellularLocation>
        <location evidence="1">Mitochondrion</location>
    </subcellularLocation>
</comment>
<comment type="miscellaneous">
    <text>A stretch of 270 kb of the mitochondrial genome is duplicated within the centromere of chromosome 2 resulting in the duplication of the gene. The expression of the duplicated gene (At2g07693) is not demonstrated.</text>
</comment>
<reference key="1">
    <citation type="journal article" date="1997" name="Nat. Genet.">
        <title>The mitochondrial genome of Arabidopsis thaliana contains 57 genes in 366,924 nucleotides.</title>
        <authorList>
            <person name="Unseld M."/>
            <person name="Marienfeld J.R."/>
            <person name="Brandt P."/>
            <person name="Brennicke A."/>
        </authorList>
    </citation>
    <scope>NUCLEOTIDE SEQUENCE [LARGE SCALE GENOMIC DNA]</scope>
    <source>
        <strain>cv. C24</strain>
    </source>
</reference>
<reference key="2">
    <citation type="journal article" date="2018" name="Plant Cell">
        <title>Correction of persistent errors in Arabidopsis reference mitochondrial genomes.</title>
        <authorList>
            <person name="Sloan D.B."/>
            <person name="Wu Z."/>
            <person name="Sharbrough J."/>
        </authorList>
    </citation>
    <scope>NUCLEOTIDE SEQUENCE [LARGE SCALE GENOMIC DNA]</scope>
    <source>
        <strain>cv. Columbia</strain>
    </source>
</reference>
<reference key="3">
    <citation type="journal article" date="1999" name="Nature">
        <title>Sequence and analysis of chromosome 2 of the plant Arabidopsis thaliana.</title>
        <authorList>
            <person name="Lin X."/>
            <person name="Kaul S."/>
            <person name="Rounsley S.D."/>
            <person name="Shea T.P."/>
            <person name="Benito M.-I."/>
            <person name="Town C.D."/>
            <person name="Fujii C.Y."/>
            <person name="Mason T.M."/>
            <person name="Bowman C.L."/>
            <person name="Barnstead M.E."/>
            <person name="Feldblyum T.V."/>
            <person name="Buell C.R."/>
            <person name="Ketchum K.A."/>
            <person name="Lee J.J."/>
            <person name="Ronning C.M."/>
            <person name="Koo H.L."/>
            <person name="Moffat K.S."/>
            <person name="Cronin L.A."/>
            <person name="Shen M."/>
            <person name="Pai G."/>
            <person name="Van Aken S."/>
            <person name="Umayam L."/>
            <person name="Tallon L.J."/>
            <person name="Gill J.E."/>
            <person name="Adams M.D."/>
            <person name="Carrera A.J."/>
            <person name="Creasy T.H."/>
            <person name="Goodman H.M."/>
            <person name="Somerville C.R."/>
            <person name="Copenhaver G.P."/>
            <person name="Preuss D."/>
            <person name="Nierman W.C."/>
            <person name="White O."/>
            <person name="Eisen J.A."/>
            <person name="Salzberg S.L."/>
            <person name="Fraser C.M."/>
            <person name="Venter J.C."/>
        </authorList>
    </citation>
    <scope>NUCLEOTIDE SEQUENCE [LARGE SCALE GENOMIC DNA] (AT2G07693)</scope>
    <source>
        <strain>cv. Columbia</strain>
    </source>
</reference>
<reference key="4">
    <citation type="journal article" date="2017" name="Plant J.">
        <title>Araport11: a complete reannotation of the Arabidopsis thaliana reference genome.</title>
        <authorList>
            <person name="Cheng C.Y."/>
            <person name="Krishnakumar V."/>
            <person name="Chan A.P."/>
            <person name="Thibaud-Nissen F."/>
            <person name="Schobel S."/>
            <person name="Town C.D."/>
        </authorList>
    </citation>
    <scope>GENOME REANNOTATION (AT2G07693)</scope>
    <source>
        <strain>cv. Columbia</strain>
    </source>
</reference>
<gene>
    <name evidence="3" type="ordered locus">AtMg01290</name>
</gene>
<gene>
    <name evidence="2" type="ordered locus">At2g07693</name>
</gene>
<geneLocation type="mitochondrion"/>
<evidence type="ECO:0000305" key="1"/>
<evidence type="ECO:0000312" key="2">
    <source>
        <dbReference type="Araport" id="AT2G07693"/>
    </source>
</evidence>
<evidence type="ECO:0000312" key="3">
    <source>
        <dbReference type="Araport" id="ATMG01290"/>
    </source>
</evidence>
<organism>
    <name type="scientific">Arabidopsis thaliana</name>
    <name type="common">Mouse-ear cress</name>
    <dbReference type="NCBI Taxonomy" id="3702"/>
    <lineage>
        <taxon>Eukaryota</taxon>
        <taxon>Viridiplantae</taxon>
        <taxon>Streptophyta</taxon>
        <taxon>Embryophyta</taxon>
        <taxon>Tracheophyta</taxon>
        <taxon>Spermatophyta</taxon>
        <taxon>Magnoliopsida</taxon>
        <taxon>eudicotyledons</taxon>
        <taxon>Gunneridae</taxon>
        <taxon>Pentapetalae</taxon>
        <taxon>rosids</taxon>
        <taxon>malvids</taxon>
        <taxon>Brassicales</taxon>
        <taxon>Brassicaceae</taxon>
        <taxon>Camelineae</taxon>
        <taxon>Arabidopsis</taxon>
    </lineage>
</organism>
<proteinExistence type="predicted"/>